<protein>
    <recommendedName>
        <fullName evidence="1">Phosphatidylserine decarboxylase proenzyme</fullName>
        <ecNumber evidence="1">4.1.1.65</ecNumber>
    </recommendedName>
    <component>
        <recommendedName>
            <fullName evidence="1">Phosphatidylserine decarboxylase alpha chain</fullName>
        </recommendedName>
    </component>
    <component>
        <recommendedName>
            <fullName evidence="1">Phosphatidylserine decarboxylase beta chain</fullName>
        </recommendedName>
    </component>
</protein>
<feature type="chain" id="PRO_1000026696" description="Phosphatidylserine decarboxylase beta chain" evidence="1">
    <location>
        <begin position="1"/>
        <end position="168"/>
    </location>
</feature>
<feature type="chain" id="PRO_1000026697" description="Phosphatidylserine decarboxylase alpha chain" evidence="1">
    <location>
        <begin position="169"/>
        <end position="204"/>
    </location>
</feature>
<feature type="active site" description="Schiff-base intermediate with substrate; via pyruvic acid" evidence="1">
    <location>
        <position position="169"/>
    </location>
</feature>
<feature type="site" description="Cleavage (non-hydrolytic); by autocatalysis" evidence="1">
    <location>
        <begin position="168"/>
        <end position="169"/>
    </location>
</feature>
<feature type="modified residue" description="Pyruvic acid (Ser); by autocatalysis" evidence="1">
    <location>
        <position position="169"/>
    </location>
</feature>
<sequence>MKIVSTGIYYALALCAAAALVAWLAGPLFAIPLILVALFCLYFFRDPDREIPAGPVAVSPADGKVVAVKPEGGLSRLSIFLNVFDVHVNRTPIAGTIQKVQYKEGQFLVASREECSTDNEQNIVTVAGDGTTVIFKQIAGLIARRIVFTKRPGDHVALGERIGLIKFGSRMDVLFGPEWEITVRPGQRVSAGSSIIARRLDRKS</sequence>
<evidence type="ECO:0000255" key="1">
    <source>
        <dbReference type="HAMAP-Rule" id="MF_00664"/>
    </source>
</evidence>
<keyword id="KW-1003">Cell membrane</keyword>
<keyword id="KW-0210">Decarboxylase</keyword>
<keyword id="KW-0444">Lipid biosynthesis</keyword>
<keyword id="KW-0443">Lipid metabolism</keyword>
<keyword id="KW-0456">Lyase</keyword>
<keyword id="KW-0472">Membrane</keyword>
<keyword id="KW-0594">Phospholipid biosynthesis</keyword>
<keyword id="KW-1208">Phospholipid metabolism</keyword>
<keyword id="KW-0670">Pyruvate</keyword>
<keyword id="KW-0865">Zymogen</keyword>
<gene>
    <name evidence="1" type="primary">psd</name>
    <name type="ordered locus">Acid_1717</name>
</gene>
<name>PSD_SOLUE</name>
<organism>
    <name type="scientific">Solibacter usitatus (strain Ellin6076)</name>
    <dbReference type="NCBI Taxonomy" id="234267"/>
    <lineage>
        <taxon>Bacteria</taxon>
        <taxon>Pseudomonadati</taxon>
        <taxon>Acidobacteriota</taxon>
        <taxon>Terriglobia</taxon>
        <taxon>Bryobacterales</taxon>
        <taxon>Solibacteraceae</taxon>
        <taxon>Candidatus Solibacter</taxon>
    </lineage>
</organism>
<proteinExistence type="inferred from homology"/>
<dbReference type="EC" id="4.1.1.65" evidence="1"/>
<dbReference type="EMBL" id="CP000473">
    <property type="protein sequence ID" value="ABJ82707.1"/>
    <property type="molecule type" value="Genomic_DNA"/>
</dbReference>
<dbReference type="STRING" id="234267.Acid_1717"/>
<dbReference type="KEGG" id="sus:Acid_1717"/>
<dbReference type="eggNOG" id="COG0688">
    <property type="taxonomic scope" value="Bacteria"/>
</dbReference>
<dbReference type="HOGENOM" id="CLU_072492_2_0_0"/>
<dbReference type="InParanoid" id="Q027V0"/>
<dbReference type="OrthoDB" id="9790893at2"/>
<dbReference type="UniPathway" id="UPA00558">
    <property type="reaction ID" value="UER00616"/>
</dbReference>
<dbReference type="GO" id="GO:0005886">
    <property type="term" value="C:plasma membrane"/>
    <property type="evidence" value="ECO:0007669"/>
    <property type="project" value="UniProtKB-SubCell"/>
</dbReference>
<dbReference type="GO" id="GO:0004609">
    <property type="term" value="F:phosphatidylserine decarboxylase activity"/>
    <property type="evidence" value="ECO:0007669"/>
    <property type="project" value="UniProtKB-UniRule"/>
</dbReference>
<dbReference type="GO" id="GO:0006646">
    <property type="term" value="P:phosphatidylethanolamine biosynthetic process"/>
    <property type="evidence" value="ECO:0007669"/>
    <property type="project" value="UniProtKB-UniRule"/>
</dbReference>
<dbReference type="HAMAP" id="MF_00664">
    <property type="entry name" value="PS_decarb_PSD_A"/>
    <property type="match status" value="1"/>
</dbReference>
<dbReference type="InterPro" id="IPR003817">
    <property type="entry name" value="PS_Dcarbxylase"/>
</dbReference>
<dbReference type="InterPro" id="IPR033175">
    <property type="entry name" value="PSD-A"/>
</dbReference>
<dbReference type="NCBIfam" id="NF003685">
    <property type="entry name" value="PRK05305.2-5"/>
    <property type="match status" value="1"/>
</dbReference>
<dbReference type="PANTHER" id="PTHR35809">
    <property type="entry name" value="ARCHAETIDYLSERINE DECARBOXYLASE PROENZYME-RELATED"/>
    <property type="match status" value="1"/>
</dbReference>
<dbReference type="PANTHER" id="PTHR35809:SF1">
    <property type="entry name" value="ARCHAETIDYLSERINE DECARBOXYLASE PROENZYME-RELATED"/>
    <property type="match status" value="1"/>
</dbReference>
<dbReference type="Pfam" id="PF02666">
    <property type="entry name" value="PS_Dcarbxylase"/>
    <property type="match status" value="1"/>
</dbReference>
<accession>Q027V0</accession>
<reference key="1">
    <citation type="journal article" date="2009" name="Appl. Environ. Microbiol.">
        <title>Three genomes from the phylum Acidobacteria provide insight into the lifestyles of these microorganisms in soils.</title>
        <authorList>
            <person name="Ward N.L."/>
            <person name="Challacombe J.F."/>
            <person name="Janssen P.H."/>
            <person name="Henrissat B."/>
            <person name="Coutinho P.M."/>
            <person name="Wu M."/>
            <person name="Xie G."/>
            <person name="Haft D.H."/>
            <person name="Sait M."/>
            <person name="Badger J."/>
            <person name="Barabote R.D."/>
            <person name="Bradley B."/>
            <person name="Brettin T.S."/>
            <person name="Brinkac L.M."/>
            <person name="Bruce D."/>
            <person name="Creasy T."/>
            <person name="Daugherty S.C."/>
            <person name="Davidsen T.M."/>
            <person name="DeBoy R.T."/>
            <person name="Detter J.C."/>
            <person name="Dodson R.J."/>
            <person name="Durkin A.S."/>
            <person name="Ganapathy A."/>
            <person name="Gwinn-Giglio M."/>
            <person name="Han C.S."/>
            <person name="Khouri H."/>
            <person name="Kiss H."/>
            <person name="Kothari S.P."/>
            <person name="Madupu R."/>
            <person name="Nelson K.E."/>
            <person name="Nelson W.C."/>
            <person name="Paulsen I."/>
            <person name="Penn K."/>
            <person name="Ren Q."/>
            <person name="Rosovitz M.J."/>
            <person name="Selengut J.D."/>
            <person name="Shrivastava S."/>
            <person name="Sullivan S.A."/>
            <person name="Tapia R."/>
            <person name="Thompson L.S."/>
            <person name="Watkins K.L."/>
            <person name="Yang Q."/>
            <person name="Yu C."/>
            <person name="Zafar N."/>
            <person name="Zhou L."/>
            <person name="Kuske C.R."/>
        </authorList>
    </citation>
    <scope>NUCLEOTIDE SEQUENCE [LARGE SCALE GENOMIC DNA]</scope>
    <source>
        <strain>Ellin6076</strain>
    </source>
</reference>
<comment type="function">
    <text evidence="1">Catalyzes the formation of phosphatidylethanolamine (PtdEtn) from phosphatidylserine (PtdSer).</text>
</comment>
<comment type="catalytic activity">
    <reaction evidence="1">
        <text>a 1,2-diacyl-sn-glycero-3-phospho-L-serine + H(+) = a 1,2-diacyl-sn-glycero-3-phosphoethanolamine + CO2</text>
        <dbReference type="Rhea" id="RHEA:20828"/>
        <dbReference type="ChEBI" id="CHEBI:15378"/>
        <dbReference type="ChEBI" id="CHEBI:16526"/>
        <dbReference type="ChEBI" id="CHEBI:57262"/>
        <dbReference type="ChEBI" id="CHEBI:64612"/>
        <dbReference type="EC" id="4.1.1.65"/>
    </reaction>
</comment>
<comment type="cofactor">
    <cofactor evidence="1">
        <name>pyruvate</name>
        <dbReference type="ChEBI" id="CHEBI:15361"/>
    </cofactor>
    <text evidence="1">Binds 1 pyruvoyl group covalently per subunit.</text>
</comment>
<comment type="pathway">
    <text evidence="1">Phospholipid metabolism; phosphatidylethanolamine biosynthesis; phosphatidylethanolamine from CDP-diacylglycerol: step 2/2.</text>
</comment>
<comment type="subunit">
    <text evidence="1">Heterodimer of a large membrane-associated beta subunit and a small pyruvoyl-containing alpha subunit.</text>
</comment>
<comment type="subcellular location">
    <subcellularLocation>
        <location evidence="1">Cell membrane</location>
        <topology evidence="1">Peripheral membrane protein</topology>
    </subcellularLocation>
</comment>
<comment type="PTM">
    <text evidence="1">Is synthesized initially as an inactive proenzyme. Formation of the active enzyme involves a self-maturation process in which the active site pyruvoyl group is generated from an internal serine residue via an autocatalytic post-translational modification. Two non-identical subunits are generated from the proenzyme in this reaction, and the pyruvate is formed at the N-terminus of the alpha chain, which is derived from the carboxyl end of the proenzyme. The post-translation cleavage follows an unusual pathway, termed non-hydrolytic serinolysis, in which the side chain hydroxyl group of the serine supplies its oxygen atom to form the C-terminus of the beta chain, while the remainder of the serine residue undergoes an oxidative deamination to produce ammonia and the pyruvoyl prosthetic group on the alpha chain.</text>
</comment>
<comment type="similarity">
    <text evidence="1">Belongs to the phosphatidylserine decarboxylase family. PSD-A subfamily.</text>
</comment>